<keyword id="KW-0472">Membrane</keyword>
<keyword id="KW-0496">Mitochondrion</keyword>
<keyword id="KW-1000">Mitochondrion outer membrane</keyword>
<keyword id="KW-1185">Reference proteome</keyword>
<keyword id="KW-0812">Transmembrane</keyword>
<keyword id="KW-1134">Transmembrane beta strand</keyword>
<organism>
    <name type="scientific">Sclerotinia sclerotiorum (strain ATCC 18683 / 1980 / Ss-1)</name>
    <name type="common">White mold</name>
    <name type="synonym">Whetzelinia sclerotiorum</name>
    <dbReference type="NCBI Taxonomy" id="665079"/>
    <lineage>
        <taxon>Eukaryota</taxon>
        <taxon>Fungi</taxon>
        <taxon>Dikarya</taxon>
        <taxon>Ascomycota</taxon>
        <taxon>Pezizomycotina</taxon>
        <taxon>Leotiomycetes</taxon>
        <taxon>Helotiales</taxon>
        <taxon>Sclerotiniaceae</taxon>
        <taxon>Sclerotinia</taxon>
    </lineage>
</organism>
<protein>
    <recommendedName>
        <fullName evidence="1">Mitochondrial distribution and morphology protein 10</fullName>
    </recommendedName>
    <alternativeName>
        <fullName evidence="1">Mitochondrial inheritance component mdm10</fullName>
    </alternativeName>
</protein>
<feature type="chain" id="PRO_0000384201" description="Mitochondrial distribution and morphology protein 10">
    <location>
        <begin position="1"/>
        <end position="400"/>
    </location>
</feature>
<accession>A7F1G7</accession>
<dbReference type="EMBL" id="CH476638">
    <property type="protein sequence ID" value="EDN95559.1"/>
    <property type="molecule type" value="Genomic_DNA"/>
</dbReference>
<dbReference type="RefSeq" id="XP_001587445.1">
    <property type="nucleotide sequence ID" value="XM_001587395.1"/>
</dbReference>
<dbReference type="SMR" id="A7F1G7"/>
<dbReference type="FunCoup" id="A7F1G7">
    <property type="interactions" value="50"/>
</dbReference>
<dbReference type="STRING" id="665079.A7F1G7"/>
<dbReference type="GeneID" id="5483483"/>
<dbReference type="KEGG" id="ssl:SS1G_11437"/>
<dbReference type="VEuPathDB" id="FungiDB:sscle_07g059920"/>
<dbReference type="InParanoid" id="A7F1G7"/>
<dbReference type="OMA" id="VPGYRQI"/>
<dbReference type="OrthoDB" id="2103793at2759"/>
<dbReference type="Proteomes" id="UP000001312">
    <property type="component" value="Unassembled WGS sequence"/>
</dbReference>
<dbReference type="GO" id="GO:0032865">
    <property type="term" value="C:ERMES complex"/>
    <property type="evidence" value="ECO:0000318"/>
    <property type="project" value="GO_Central"/>
</dbReference>
<dbReference type="GO" id="GO:0001401">
    <property type="term" value="C:SAM complex"/>
    <property type="evidence" value="ECO:0000318"/>
    <property type="project" value="GO_Central"/>
</dbReference>
<dbReference type="GO" id="GO:0051654">
    <property type="term" value="P:establishment of mitochondrion localization"/>
    <property type="evidence" value="ECO:0000318"/>
    <property type="project" value="GO_Central"/>
</dbReference>
<dbReference type="GO" id="GO:0000002">
    <property type="term" value="P:mitochondrial genome maintenance"/>
    <property type="evidence" value="ECO:0007669"/>
    <property type="project" value="UniProtKB-UniRule"/>
</dbReference>
<dbReference type="GO" id="GO:0070096">
    <property type="term" value="P:mitochondrial outer membrane translocase complex assembly"/>
    <property type="evidence" value="ECO:0000318"/>
    <property type="project" value="GO_Central"/>
</dbReference>
<dbReference type="GO" id="GO:1990456">
    <property type="term" value="P:mitochondrion-endoplasmic reticulum membrane tethering"/>
    <property type="evidence" value="ECO:0000318"/>
    <property type="project" value="GO_Central"/>
</dbReference>
<dbReference type="GO" id="GO:0015914">
    <property type="term" value="P:phospholipid transport"/>
    <property type="evidence" value="ECO:0000318"/>
    <property type="project" value="GO_Central"/>
</dbReference>
<dbReference type="GO" id="GO:0045040">
    <property type="term" value="P:protein insertion into mitochondrial outer membrane"/>
    <property type="evidence" value="ECO:0000318"/>
    <property type="project" value="GO_Central"/>
</dbReference>
<dbReference type="FunFam" id="2.40.160.10:FF:000031">
    <property type="entry name" value="Mitochondrial distribution and morphology protein 10"/>
    <property type="match status" value="1"/>
</dbReference>
<dbReference type="Gene3D" id="2.40.160.10">
    <property type="entry name" value="Porin"/>
    <property type="match status" value="1"/>
</dbReference>
<dbReference type="HAMAP" id="MF_03102">
    <property type="entry name" value="Mdm10"/>
    <property type="match status" value="1"/>
</dbReference>
<dbReference type="InterPro" id="IPR027539">
    <property type="entry name" value="Mdm10"/>
</dbReference>
<dbReference type="InterPro" id="IPR023614">
    <property type="entry name" value="Porin_dom_sf"/>
</dbReference>
<dbReference type="PANTHER" id="PTHR28035">
    <property type="entry name" value="MITOCHONDRIAL DISTRIBUTION AND MORPHOLOGY PROTEIN 10"/>
    <property type="match status" value="1"/>
</dbReference>
<dbReference type="PANTHER" id="PTHR28035:SF1">
    <property type="entry name" value="MITOCHONDRIAL DISTRIBUTION AND MORPHOLOGY PROTEIN 10"/>
    <property type="match status" value="1"/>
</dbReference>
<dbReference type="Pfam" id="PF12519">
    <property type="entry name" value="MDM10"/>
    <property type="match status" value="1"/>
</dbReference>
<evidence type="ECO:0000255" key="1">
    <source>
        <dbReference type="HAMAP-Rule" id="MF_03102"/>
    </source>
</evidence>
<sequence>MLEFMDYVQFAFYNATKWNYENSYSQLTATAKGLLDFETPGGLRFNLSSLSSPNFATSYALGSVGLVDGSLSYLYSSLPLRTTAQSAKIDLHEIIRGYRQIQELRRVDEPWMLEQWHGGRRIDKRDTLLYGRLYLPQSTLEALYLRRITPTQQVRITAVSDSRLRNGGTILALHQYDTGKYSTETLYSTDGGLLGLRGLYNFGPDPRKEVTEPPKQMPRIDDKFYGRFSAGAELYYGTLNKSGGVSVGGRFATLPAHRGIPLTATLTLNPLMGNISSTYAVRAGKNLSLCSRLDFNVYSYESDLVLGCELWKMRAPVEERRERSMEAKLAWRLDEVDLEKEKKPEEVAGVLKARVDQNLKVGLVWEGRVKELLFTLGTSIDMKRRDQPFRALGLELQYSS</sequence>
<name>MDM10_SCLS1</name>
<comment type="function">
    <text evidence="1">Component of the ERMES/MDM complex, which serves as a molecular tether to connect the endoplasmic reticulum and mitochondria. Components of this complex are involved in the control of mitochondrial shape and protein biogenesis and may function in phospholipid exchange. mdm10 is involved in the late assembly steps of the general translocase of the mitochondrial outer membrane (TOM complex). Functions in the tom40-specific route of the assembly of outer membrane beta-barrel proteins, including the association of tom40 with the receptor tom22 and small TOM proteins. Can associate with the SAM(core) complex as well as the mdm12-mmm1 complex, both involved in late steps of the major beta-barrel assembly pathway, that is responsible for biogenesis of all outer membrane beta-barrel proteins. May act as a switch that shuttles between both complexes and channels precursor proteins into the tom40-specific pathway. Plays a role in mitochondrial morphology and in the inheritance of mitochondria.</text>
</comment>
<comment type="subunit">
    <text evidence="1">Component of the ER-mitochondria encounter structure (ERMES) or MDM complex, composed of mmm1, mdm10, mdm12 and mdm34. Associates with the mitochondrial outer membrane sorting assembly machinery SAM(core) complex.</text>
</comment>
<comment type="subcellular location">
    <subcellularLocation>
        <location evidence="1">Mitochondrion outer membrane</location>
        <topology evidence="1">Multi-pass membrane protein</topology>
    </subcellularLocation>
    <text evidence="1">The ERMES/MDM complex localizes to a few discrete foci (around 10 per single cell), that represent mitochondria-endoplasmic reticulum junctions. These foci are often found next to mtDNA nucleoids.</text>
</comment>
<comment type="domain">
    <text>Lacks alpha-helical transmembrane segments, suggesting that it resides in the membrane via beta-sheet conformations similar to those predicted for other outer membrane proteins and porin.</text>
</comment>
<comment type="similarity">
    <text evidence="1">Belongs to the MDM10 family.</text>
</comment>
<reference key="1">
    <citation type="journal article" date="2011" name="PLoS Genet.">
        <title>Genomic analysis of the necrotrophic fungal pathogens Sclerotinia sclerotiorum and Botrytis cinerea.</title>
        <authorList>
            <person name="Amselem J."/>
            <person name="Cuomo C.A."/>
            <person name="van Kan J.A.L."/>
            <person name="Viaud M."/>
            <person name="Benito E.P."/>
            <person name="Couloux A."/>
            <person name="Coutinho P.M."/>
            <person name="de Vries R.P."/>
            <person name="Dyer P.S."/>
            <person name="Fillinger S."/>
            <person name="Fournier E."/>
            <person name="Gout L."/>
            <person name="Hahn M."/>
            <person name="Kohn L."/>
            <person name="Lapalu N."/>
            <person name="Plummer K.M."/>
            <person name="Pradier J.-M."/>
            <person name="Quevillon E."/>
            <person name="Sharon A."/>
            <person name="Simon A."/>
            <person name="ten Have A."/>
            <person name="Tudzynski B."/>
            <person name="Tudzynski P."/>
            <person name="Wincker P."/>
            <person name="Andrew M."/>
            <person name="Anthouard V."/>
            <person name="Beever R.E."/>
            <person name="Beffa R."/>
            <person name="Benoit I."/>
            <person name="Bouzid O."/>
            <person name="Brault B."/>
            <person name="Chen Z."/>
            <person name="Choquer M."/>
            <person name="Collemare J."/>
            <person name="Cotton P."/>
            <person name="Danchin E.G."/>
            <person name="Da Silva C."/>
            <person name="Gautier A."/>
            <person name="Giraud C."/>
            <person name="Giraud T."/>
            <person name="Gonzalez C."/>
            <person name="Grossetete S."/>
            <person name="Gueldener U."/>
            <person name="Henrissat B."/>
            <person name="Howlett B.J."/>
            <person name="Kodira C."/>
            <person name="Kretschmer M."/>
            <person name="Lappartient A."/>
            <person name="Leroch M."/>
            <person name="Levis C."/>
            <person name="Mauceli E."/>
            <person name="Neuveglise C."/>
            <person name="Oeser B."/>
            <person name="Pearson M."/>
            <person name="Poulain J."/>
            <person name="Poussereau N."/>
            <person name="Quesneville H."/>
            <person name="Rascle C."/>
            <person name="Schumacher J."/>
            <person name="Segurens B."/>
            <person name="Sexton A."/>
            <person name="Silva E."/>
            <person name="Sirven C."/>
            <person name="Soanes D.M."/>
            <person name="Talbot N.J."/>
            <person name="Templeton M."/>
            <person name="Yandava C."/>
            <person name="Yarden O."/>
            <person name="Zeng Q."/>
            <person name="Rollins J.A."/>
            <person name="Lebrun M.-H."/>
            <person name="Dickman M."/>
        </authorList>
    </citation>
    <scope>NUCLEOTIDE SEQUENCE [LARGE SCALE GENOMIC DNA]</scope>
    <source>
        <strain>ATCC 18683 / 1980 / Ss-1</strain>
    </source>
</reference>
<gene>
    <name type="primary">mdm10</name>
    <name type="ORF">SS1G_11437</name>
</gene>
<proteinExistence type="inferred from homology"/>